<sequence>MDIDIVSVFPEYFDVLNLSLLGKAQERGLLAVRSHNLRQWTHDVHQSVDDTPVGGGAGMVMKPEVWAECLDELLGIPADAPANAHAAPAADSPVLIFPNPSAPLFTQQDATALSHAEHLVFGCGRYEGYDARIPQYYRERGVDVREYSIGDYVLNGGEVAVSVMLEAITRLLPGFMGNADSIVEESYTGENALLEHNQYTKPASWRGIDVPPVLISGDHGRVNRFRRDEALEKTSRLRPDLIARLDCHALDKQDRKTLMSLGWEVSGEHPRKLED</sequence>
<keyword id="KW-0963">Cytoplasm</keyword>
<keyword id="KW-0489">Methyltransferase</keyword>
<keyword id="KW-1185">Reference proteome</keyword>
<keyword id="KW-0949">S-adenosyl-L-methionine</keyword>
<keyword id="KW-0808">Transferase</keyword>
<keyword id="KW-0819">tRNA processing</keyword>
<proteinExistence type="inferred from homology"/>
<gene>
    <name evidence="1" type="primary">trmD</name>
    <name type="ordered locus">BLA_0252</name>
</gene>
<comment type="function">
    <text evidence="1">Specifically methylates guanosine-37 in various tRNAs.</text>
</comment>
<comment type="catalytic activity">
    <reaction evidence="1">
        <text>guanosine(37) in tRNA + S-adenosyl-L-methionine = N(1)-methylguanosine(37) in tRNA + S-adenosyl-L-homocysteine + H(+)</text>
        <dbReference type="Rhea" id="RHEA:36899"/>
        <dbReference type="Rhea" id="RHEA-COMP:10145"/>
        <dbReference type="Rhea" id="RHEA-COMP:10147"/>
        <dbReference type="ChEBI" id="CHEBI:15378"/>
        <dbReference type="ChEBI" id="CHEBI:57856"/>
        <dbReference type="ChEBI" id="CHEBI:59789"/>
        <dbReference type="ChEBI" id="CHEBI:73542"/>
        <dbReference type="ChEBI" id="CHEBI:74269"/>
        <dbReference type="EC" id="2.1.1.228"/>
    </reaction>
</comment>
<comment type="subunit">
    <text evidence="1">Homodimer.</text>
</comment>
<comment type="subcellular location">
    <subcellularLocation>
        <location evidence="1">Cytoplasm</location>
    </subcellularLocation>
</comment>
<comment type="similarity">
    <text evidence="1">Belongs to the RNA methyltransferase TrmD family.</text>
</comment>
<accession>B8DVQ3</accession>
<dbReference type="EC" id="2.1.1.228" evidence="1"/>
<dbReference type="EMBL" id="CP001213">
    <property type="protein sequence ID" value="ACL28554.1"/>
    <property type="molecule type" value="Genomic_DNA"/>
</dbReference>
<dbReference type="RefSeq" id="WP_004268357.1">
    <property type="nucleotide sequence ID" value="NC_011835.1"/>
</dbReference>
<dbReference type="SMR" id="B8DVQ3"/>
<dbReference type="STRING" id="442563.BLA_0252"/>
<dbReference type="GeneID" id="29696105"/>
<dbReference type="KEGG" id="bla:BLA_0252"/>
<dbReference type="HOGENOM" id="CLU_047363_0_0_11"/>
<dbReference type="Proteomes" id="UP000002456">
    <property type="component" value="Chromosome"/>
</dbReference>
<dbReference type="GO" id="GO:0005829">
    <property type="term" value="C:cytosol"/>
    <property type="evidence" value="ECO:0007669"/>
    <property type="project" value="TreeGrafter"/>
</dbReference>
<dbReference type="GO" id="GO:0052906">
    <property type="term" value="F:tRNA (guanine(37)-N1)-methyltransferase activity"/>
    <property type="evidence" value="ECO:0007669"/>
    <property type="project" value="UniProtKB-UniRule"/>
</dbReference>
<dbReference type="GO" id="GO:0002939">
    <property type="term" value="P:tRNA N1-guanine methylation"/>
    <property type="evidence" value="ECO:0007669"/>
    <property type="project" value="TreeGrafter"/>
</dbReference>
<dbReference type="CDD" id="cd18080">
    <property type="entry name" value="TrmD-like"/>
    <property type="match status" value="1"/>
</dbReference>
<dbReference type="FunFam" id="1.10.1270.20:FF:000002">
    <property type="entry name" value="tRNA (guanine-N(1)-)-methyltransferase"/>
    <property type="match status" value="1"/>
</dbReference>
<dbReference type="Gene3D" id="3.40.1280.10">
    <property type="match status" value="1"/>
</dbReference>
<dbReference type="Gene3D" id="1.10.1270.20">
    <property type="entry name" value="tRNA(m1g37)methyltransferase, domain 2"/>
    <property type="match status" value="1"/>
</dbReference>
<dbReference type="HAMAP" id="MF_00605">
    <property type="entry name" value="TrmD"/>
    <property type="match status" value="1"/>
</dbReference>
<dbReference type="InterPro" id="IPR029028">
    <property type="entry name" value="Alpha/beta_knot_MTases"/>
</dbReference>
<dbReference type="InterPro" id="IPR023148">
    <property type="entry name" value="tRNA_m1G_MeTrfase_C_sf"/>
</dbReference>
<dbReference type="InterPro" id="IPR002649">
    <property type="entry name" value="tRNA_m1G_MeTrfase_TrmD"/>
</dbReference>
<dbReference type="InterPro" id="IPR029026">
    <property type="entry name" value="tRNA_m1G_MTases_N"/>
</dbReference>
<dbReference type="InterPro" id="IPR016009">
    <property type="entry name" value="tRNA_MeTrfase_TRMD/TRM10"/>
</dbReference>
<dbReference type="NCBIfam" id="NF000648">
    <property type="entry name" value="PRK00026.1"/>
    <property type="match status" value="1"/>
</dbReference>
<dbReference type="NCBIfam" id="TIGR00088">
    <property type="entry name" value="trmD"/>
    <property type="match status" value="1"/>
</dbReference>
<dbReference type="PANTHER" id="PTHR46417">
    <property type="entry name" value="TRNA (GUANINE-N(1)-)-METHYLTRANSFERASE"/>
    <property type="match status" value="1"/>
</dbReference>
<dbReference type="PANTHER" id="PTHR46417:SF1">
    <property type="entry name" value="TRNA (GUANINE-N(1)-)-METHYLTRANSFERASE"/>
    <property type="match status" value="1"/>
</dbReference>
<dbReference type="Pfam" id="PF01746">
    <property type="entry name" value="tRNA_m1G_MT"/>
    <property type="match status" value="1"/>
</dbReference>
<dbReference type="PIRSF" id="PIRSF000386">
    <property type="entry name" value="tRNA_mtase"/>
    <property type="match status" value="1"/>
</dbReference>
<dbReference type="SUPFAM" id="SSF75217">
    <property type="entry name" value="alpha/beta knot"/>
    <property type="match status" value="1"/>
</dbReference>
<reference key="1">
    <citation type="journal article" date="2009" name="J. Bacteriol.">
        <title>Genome sequence of the probiotic bacterium Bifidobacterium animalis subsp. lactis AD011.</title>
        <authorList>
            <person name="Kim J.F."/>
            <person name="Jeong H."/>
            <person name="Yu D.S."/>
            <person name="Choi S.-H."/>
            <person name="Hur C.-G."/>
            <person name="Park M.-S."/>
            <person name="Yoon S.H."/>
            <person name="Kim D.-W."/>
            <person name="Ji G.E."/>
            <person name="Park H.-S."/>
            <person name="Oh T.K."/>
        </authorList>
    </citation>
    <scope>NUCLEOTIDE SEQUENCE [LARGE SCALE GENOMIC DNA]</scope>
    <source>
        <strain>AD011</strain>
    </source>
</reference>
<protein>
    <recommendedName>
        <fullName evidence="1">tRNA (guanine-N(1)-)-methyltransferase</fullName>
        <ecNumber evidence="1">2.1.1.228</ecNumber>
    </recommendedName>
    <alternativeName>
        <fullName evidence="1">M1G-methyltransferase</fullName>
    </alternativeName>
    <alternativeName>
        <fullName evidence="1">tRNA [GM37] methyltransferase</fullName>
    </alternativeName>
</protein>
<name>TRMD_BIFA0</name>
<organism>
    <name type="scientific">Bifidobacterium animalis subsp. lactis (strain AD011)</name>
    <dbReference type="NCBI Taxonomy" id="442563"/>
    <lineage>
        <taxon>Bacteria</taxon>
        <taxon>Bacillati</taxon>
        <taxon>Actinomycetota</taxon>
        <taxon>Actinomycetes</taxon>
        <taxon>Bifidobacteriales</taxon>
        <taxon>Bifidobacteriaceae</taxon>
        <taxon>Bifidobacterium</taxon>
    </lineage>
</organism>
<evidence type="ECO:0000255" key="1">
    <source>
        <dbReference type="HAMAP-Rule" id="MF_00605"/>
    </source>
</evidence>
<feature type="chain" id="PRO_1000147073" description="tRNA (guanine-N(1)-)-methyltransferase">
    <location>
        <begin position="1"/>
        <end position="275"/>
    </location>
</feature>
<feature type="binding site" evidence="1">
    <location>
        <position position="124"/>
    </location>
    <ligand>
        <name>S-adenosyl-L-methionine</name>
        <dbReference type="ChEBI" id="CHEBI:59789"/>
    </ligand>
</feature>
<feature type="binding site" evidence="1">
    <location>
        <begin position="149"/>
        <end position="154"/>
    </location>
    <ligand>
        <name>S-adenosyl-L-methionine</name>
        <dbReference type="ChEBI" id="CHEBI:59789"/>
    </ligand>
</feature>